<proteinExistence type="evidence at transcript level"/>
<protein>
    <recommendedName>
        <fullName>Conotoxin AbVIB</fullName>
    </recommendedName>
</protein>
<name>O16B_CONAB</name>
<keyword id="KW-1015">Disulfide bond</keyword>
<keyword id="KW-0960">Knottin</keyword>
<keyword id="KW-0964">Secreted</keyword>
<keyword id="KW-0732">Signal</keyword>
<keyword id="KW-0800">Toxin</keyword>
<sequence length="70" mass="7261">VIIIAVLFLTACQLTTAETSSRGKQKHRALRSTDKNSKLTRGCTPPGGACGGHAHCCSQSCDILASTCNA</sequence>
<accession>Q9UA83</accession>
<evidence type="ECO:0000250" key="1"/>
<evidence type="ECO:0000255" key="2"/>
<evidence type="ECO:0000256" key="3">
    <source>
        <dbReference type="SAM" id="MobiDB-lite"/>
    </source>
</evidence>
<evidence type="ECO:0000305" key="4"/>
<comment type="subcellular location">
    <subcellularLocation>
        <location evidence="1">Secreted</location>
    </subcellularLocation>
</comment>
<comment type="tissue specificity">
    <text>Expressed by the venom duct.</text>
</comment>
<comment type="domain">
    <text evidence="1">The presence of a 'disulfide through disulfide knot' structurally defines this protein as a knottin.</text>
</comment>
<comment type="domain">
    <text>The cysteine framework is VI/VII (C-C-CC-C-C).</text>
</comment>
<comment type="similarity">
    <text evidence="4">Belongs to the conotoxin O1 superfamily.</text>
</comment>
<reference key="1">
    <citation type="journal article" date="1999" name="Proc. Natl. Acad. Sci. U.S.A.">
        <title>Molecular genetics of ecological diversification: duplication and rapid evolution of toxin genes of the venomous gastropod Conus.</title>
        <authorList>
            <person name="Duda T.F. Jr."/>
            <person name="Palumbi S.R."/>
        </authorList>
    </citation>
    <scope>NUCLEOTIDE SEQUENCE [MRNA]</scope>
    <source>
        <tissue>Venom duct</tissue>
    </source>
</reference>
<reference key="2">
    <citation type="journal article" date="2004" name="Proc. R. Soc. B">
        <title>Gene expression and feeding ecology: evolution of piscivory in the venomous gastropod genus Conus.</title>
        <authorList>
            <person name="Duda T.F. Jr."/>
            <person name="Palumbi S.R."/>
        </authorList>
    </citation>
    <scope>NUCLEOTIDE SEQUENCE [MRNA]</scope>
    <source>
        <tissue>Venom duct</tissue>
    </source>
</reference>
<feature type="signal peptide" evidence="2">
    <location>
        <begin position="1" status="less than"/>
        <end position="17"/>
    </location>
</feature>
<feature type="propeptide" id="PRO_0000392112" evidence="1">
    <location>
        <begin position="18"/>
        <end position="41"/>
    </location>
</feature>
<feature type="peptide" id="PRO_0000392113" description="Conotoxin AbVIB">
    <location>
        <begin position="42"/>
        <end position="70"/>
    </location>
</feature>
<feature type="region of interest" description="Disordered" evidence="3">
    <location>
        <begin position="20"/>
        <end position="41"/>
    </location>
</feature>
<feature type="disulfide bond" evidence="1">
    <location>
        <begin position="43"/>
        <end position="57"/>
    </location>
</feature>
<feature type="disulfide bond" evidence="1">
    <location>
        <begin position="50"/>
        <end position="61"/>
    </location>
</feature>
<feature type="disulfide bond" evidence="1">
    <location>
        <begin position="56"/>
        <end position="68"/>
    </location>
</feature>
<feature type="non-terminal residue">
    <location>
        <position position="1"/>
    </location>
</feature>
<organism>
    <name type="scientific">Conus abbreviatus</name>
    <name type="common">Abbreviated cone</name>
    <name type="synonym">Miliariconus abbreviatus</name>
    <dbReference type="NCBI Taxonomy" id="100123"/>
    <lineage>
        <taxon>Eukaryota</taxon>
        <taxon>Metazoa</taxon>
        <taxon>Spiralia</taxon>
        <taxon>Lophotrochozoa</taxon>
        <taxon>Mollusca</taxon>
        <taxon>Gastropoda</taxon>
        <taxon>Caenogastropoda</taxon>
        <taxon>Neogastropoda</taxon>
        <taxon>Conoidea</taxon>
        <taxon>Conidae</taxon>
        <taxon>Conus</taxon>
        <taxon>Virroconus</taxon>
    </lineage>
</organism>
<dbReference type="EMBL" id="AF090035">
    <property type="protein sequence ID" value="AAD48288.1"/>
    <property type="molecule type" value="mRNA"/>
</dbReference>
<dbReference type="SMR" id="Q9UA83"/>
<dbReference type="ConoServer" id="1010">
    <property type="toxin name" value="ABVIB precursor"/>
</dbReference>
<dbReference type="GO" id="GO:0005576">
    <property type="term" value="C:extracellular region"/>
    <property type="evidence" value="ECO:0007669"/>
    <property type="project" value="UniProtKB-SubCell"/>
</dbReference>
<dbReference type="GO" id="GO:0008200">
    <property type="term" value="F:ion channel inhibitor activity"/>
    <property type="evidence" value="ECO:0007669"/>
    <property type="project" value="InterPro"/>
</dbReference>
<dbReference type="GO" id="GO:0090729">
    <property type="term" value="F:toxin activity"/>
    <property type="evidence" value="ECO:0007669"/>
    <property type="project" value="UniProtKB-KW"/>
</dbReference>
<dbReference type="InterPro" id="IPR004214">
    <property type="entry name" value="Conotoxin"/>
</dbReference>
<dbReference type="Pfam" id="PF02950">
    <property type="entry name" value="Conotoxin"/>
    <property type="match status" value="1"/>
</dbReference>